<protein>
    <recommendedName>
        <fullName evidence="1">N-acetylneuraminate epimerase</fullName>
        <ecNumber evidence="1">5.1.3.24</ecNumber>
    </recommendedName>
    <alternativeName>
        <fullName evidence="1">N-acetylneuraminate mutarotase</fullName>
        <shortName evidence="1">Neu5Ac mutarotase</shortName>
    </alternativeName>
    <alternativeName>
        <fullName evidence="1">Sialic acid epimerase</fullName>
    </alternativeName>
</protein>
<evidence type="ECO:0000255" key="1">
    <source>
        <dbReference type="HAMAP-Rule" id="MF_01195"/>
    </source>
</evidence>
<dbReference type="EC" id="5.1.3.24" evidence="1"/>
<dbReference type="EMBL" id="CP000802">
    <property type="protein sequence ID" value="ABV08688.1"/>
    <property type="molecule type" value="Genomic_DNA"/>
</dbReference>
<dbReference type="RefSeq" id="WP_001044128.1">
    <property type="nucleotide sequence ID" value="NC_009800.1"/>
</dbReference>
<dbReference type="SMR" id="A8A834"/>
<dbReference type="GeneID" id="75206130"/>
<dbReference type="KEGG" id="ecx:EcHS_A4535"/>
<dbReference type="HOGENOM" id="CLU_061535_0_0_6"/>
<dbReference type="GO" id="GO:0042597">
    <property type="term" value="C:periplasmic space"/>
    <property type="evidence" value="ECO:0007669"/>
    <property type="project" value="UniProtKB-SubCell"/>
</dbReference>
<dbReference type="GO" id="GO:0016857">
    <property type="term" value="F:racemase and epimerase activity, acting on carbohydrates and derivatives"/>
    <property type="evidence" value="ECO:0007669"/>
    <property type="project" value="UniProtKB-UniRule"/>
</dbReference>
<dbReference type="FunFam" id="2.120.10.80:FF:000061">
    <property type="entry name" value="N-acetylneuraminate epimerase"/>
    <property type="match status" value="1"/>
</dbReference>
<dbReference type="FunFam" id="2.120.10.80:FF:000067">
    <property type="entry name" value="N-acetylneuraminate epimerase"/>
    <property type="match status" value="1"/>
</dbReference>
<dbReference type="Gene3D" id="2.120.10.80">
    <property type="entry name" value="Kelch-type beta propeller"/>
    <property type="match status" value="2"/>
</dbReference>
<dbReference type="HAMAP" id="MF_01195">
    <property type="entry name" value="NanM"/>
    <property type="match status" value="1"/>
</dbReference>
<dbReference type="InterPro" id="IPR015915">
    <property type="entry name" value="Kelch-typ_b-propeller"/>
</dbReference>
<dbReference type="InterPro" id="IPR056734">
    <property type="entry name" value="NANM"/>
</dbReference>
<dbReference type="InterPro" id="IPR019936">
    <property type="entry name" value="NanM_proteobact"/>
</dbReference>
<dbReference type="NCBIfam" id="TIGR03547">
    <property type="entry name" value="muta_rot_YjhT"/>
    <property type="match status" value="1"/>
</dbReference>
<dbReference type="NCBIfam" id="NF010730">
    <property type="entry name" value="PRK14131.1"/>
    <property type="match status" value="1"/>
</dbReference>
<dbReference type="PANTHER" id="PTHR45632">
    <property type="entry name" value="LD33804P"/>
    <property type="match status" value="1"/>
</dbReference>
<dbReference type="Pfam" id="PF24996">
    <property type="entry name" value="NANM"/>
    <property type="match status" value="1"/>
</dbReference>
<dbReference type="SUPFAM" id="SSF117281">
    <property type="entry name" value="Kelch motif"/>
    <property type="match status" value="1"/>
</dbReference>
<comment type="function">
    <text evidence="1">Converts alpha-N-acetylneuranimic acid (Neu5Ac) to the beta-anomer, accelerating the equilibrium between the alpha- and beta-anomers. Probably facilitates sialidase-negative bacteria to compete successfully for limited amounts of extracellular Neu5Ac, which is likely taken up in the beta-anomer. In addition, the rapid removal of sialic acid from solution might be advantageous to the bacterium to damp down host responses.</text>
</comment>
<comment type="catalytic activity">
    <reaction evidence="1">
        <text>N-acetyl-alpha-neuraminate = N-acetyl-beta-neuraminate</text>
        <dbReference type="Rhea" id="RHEA:25233"/>
        <dbReference type="ChEBI" id="CHEBI:58705"/>
        <dbReference type="ChEBI" id="CHEBI:58770"/>
        <dbReference type="EC" id="5.1.3.24"/>
    </reaction>
</comment>
<comment type="subunit">
    <text evidence="1">Homodimer.</text>
</comment>
<comment type="subcellular location">
    <subcellularLocation>
        <location evidence="1">Periplasm</location>
    </subcellularLocation>
</comment>
<comment type="similarity">
    <text evidence="1">Belongs to the NanM family.</text>
</comment>
<reference key="1">
    <citation type="journal article" date="2008" name="J. Bacteriol.">
        <title>The pangenome structure of Escherichia coli: comparative genomic analysis of E. coli commensal and pathogenic isolates.</title>
        <authorList>
            <person name="Rasko D.A."/>
            <person name="Rosovitz M.J."/>
            <person name="Myers G.S.A."/>
            <person name="Mongodin E.F."/>
            <person name="Fricke W.F."/>
            <person name="Gajer P."/>
            <person name="Crabtree J."/>
            <person name="Sebaihia M."/>
            <person name="Thomson N.R."/>
            <person name="Chaudhuri R."/>
            <person name="Henderson I.R."/>
            <person name="Sperandio V."/>
            <person name="Ravel J."/>
        </authorList>
    </citation>
    <scope>NUCLEOTIDE SEQUENCE [LARGE SCALE GENOMIC DNA]</scope>
    <source>
        <strain>HS</strain>
    </source>
</reference>
<keyword id="KW-0119">Carbohydrate metabolism</keyword>
<keyword id="KW-0413">Isomerase</keyword>
<keyword id="KW-0880">Kelch repeat</keyword>
<keyword id="KW-0574">Periplasm</keyword>
<keyword id="KW-0677">Repeat</keyword>
<keyword id="KW-0732">Signal</keyword>
<gene>
    <name evidence="1" type="primary">nanM</name>
    <name type="ordered locus">EcHS_A4535</name>
</gene>
<name>NANM_ECOHS</name>
<proteinExistence type="inferred from homology"/>
<accession>A8A834</accession>
<sequence length="368" mass="39557">MNKTITALAIMMASFAANASVLPETPVPFKSGTGAIDNDTVYIGLGSAGTAWYKLDTQAKDKKWTALAAFPGGPRDQATSAFIDGNLYVFGGIGKNSKGLTQVFNDVHKYNPKTNSWVKLMSHAPMGMAGHVTFVHNGKAYVTGGVNQNIFNGYFEDLNEAGKDSATIDKINAHYFDKKAEDYFFNKFLLSFDPSTQQWSYAGESPWYGTAGAAVVNKGDKTWLINGEAKPGLRTDAVFELDFTGNNLKWNKLAPVSSPDGVAGGFAGISNDSLIFAGGAGFKGSRENYQNGKNYAHEGLKKSYSTDIHLWHNGKWDKSGELSQGRAYGVSLPWNNSLLIIGGETAGGKAVTDSVLISVKDNKVTVQN</sequence>
<organism>
    <name type="scientific">Escherichia coli O9:H4 (strain HS)</name>
    <dbReference type="NCBI Taxonomy" id="331112"/>
    <lineage>
        <taxon>Bacteria</taxon>
        <taxon>Pseudomonadati</taxon>
        <taxon>Pseudomonadota</taxon>
        <taxon>Gammaproteobacteria</taxon>
        <taxon>Enterobacterales</taxon>
        <taxon>Enterobacteriaceae</taxon>
        <taxon>Escherichia</taxon>
    </lineage>
</organism>
<feature type="signal peptide" evidence="1">
    <location>
        <begin position="1"/>
        <end position="19"/>
    </location>
</feature>
<feature type="chain" id="PRO_0000333060" description="N-acetylneuraminate epimerase">
    <location>
        <begin position="20"/>
        <end position="368"/>
    </location>
</feature>
<feature type="repeat" description="Kelch 1">
    <location>
        <begin position="40"/>
        <end position="84"/>
    </location>
</feature>
<feature type="repeat" description="Kelch 2">
    <location>
        <begin position="86"/>
        <end position="137"/>
    </location>
</feature>
<feature type="repeat" description="Kelch 3">
    <location>
        <begin position="139"/>
        <end position="173"/>
    </location>
</feature>
<feature type="repeat" description="Kelch 4">
    <location>
        <begin position="174"/>
        <end position="219"/>
    </location>
</feature>
<feature type="repeat" description="Kelch 5">
    <location>
        <begin position="222"/>
        <end position="265"/>
    </location>
</feature>
<feature type="repeat" description="Kelch 6">
    <location>
        <begin position="287"/>
        <end position="336"/>
    </location>
</feature>
<feature type="repeat" description="Kelch 7">
    <location>
        <begin position="338"/>
        <end position="367"/>
    </location>
</feature>
<feature type="active site" description="Proton acceptor" evidence="1">
    <location>
        <position position="228"/>
    </location>
</feature>